<reference key="1">
    <citation type="journal article" date="2007" name="Nat. Biotechnol.">
        <title>Comparative analysis of the complete genome sequence of the plant growth-promoting bacterium Bacillus amyloliquefaciens FZB42.</title>
        <authorList>
            <person name="Chen X.H."/>
            <person name="Koumoutsi A."/>
            <person name="Scholz R."/>
            <person name="Eisenreich A."/>
            <person name="Schneider K."/>
            <person name="Heinemeyer I."/>
            <person name="Morgenstern B."/>
            <person name="Voss B."/>
            <person name="Hess W.R."/>
            <person name="Reva O."/>
            <person name="Junge H."/>
            <person name="Voigt B."/>
            <person name="Jungblut P.R."/>
            <person name="Vater J."/>
            <person name="Suessmuth R."/>
            <person name="Liesegang H."/>
            <person name="Strittmatter A."/>
            <person name="Gottschalk G."/>
            <person name="Borriss R."/>
        </authorList>
    </citation>
    <scope>NUCLEOTIDE SEQUENCE [LARGE SCALE GENOMIC DNA]</scope>
    <source>
        <strain>DSM 23117 / BGSC 10A6 / LMG 26770 / FZB42</strain>
    </source>
</reference>
<organism>
    <name type="scientific">Bacillus velezensis (strain DSM 23117 / BGSC 10A6 / LMG 26770 / FZB42)</name>
    <name type="common">Bacillus amyloliquefaciens subsp. plantarum</name>
    <dbReference type="NCBI Taxonomy" id="326423"/>
    <lineage>
        <taxon>Bacteria</taxon>
        <taxon>Bacillati</taxon>
        <taxon>Bacillota</taxon>
        <taxon>Bacilli</taxon>
        <taxon>Bacillales</taxon>
        <taxon>Bacillaceae</taxon>
        <taxon>Bacillus</taxon>
        <taxon>Bacillus amyloliquefaciens group</taxon>
    </lineage>
</organism>
<comment type="function">
    <text evidence="1">Participates actively in the response to hyperosmotic and heat shock by preventing the aggregation of stress-denatured proteins, in association with DnaK and GrpE. It is the nucleotide exchange factor for DnaK and may function as a thermosensor. Unfolded proteins bind initially to DnaJ; upon interaction with the DnaJ-bound protein, DnaK hydrolyzes its bound ATP, resulting in the formation of a stable complex. GrpE releases ADP from DnaK; ATP binding to DnaK triggers the release of the substrate protein, thus completing the reaction cycle. Several rounds of ATP-dependent interactions between DnaJ, DnaK and GrpE are required for fully efficient folding.</text>
</comment>
<comment type="subunit">
    <text evidence="1">Homodimer.</text>
</comment>
<comment type="subcellular location">
    <subcellularLocation>
        <location evidence="1">Cytoplasm</location>
    </subcellularLocation>
</comment>
<comment type="similarity">
    <text evidence="1">Belongs to the GrpE family.</text>
</comment>
<gene>
    <name evidence="1" type="primary">grpE</name>
    <name type="ordered locus">RBAM_023780</name>
</gene>
<sequence length="191" mass="21959">MSEEKQTAEQVEAAEQEEVTEQAEQAASQEQHEETAGQEEALQHQIDELQGLLDEKENKLLRVQADFENYKRRSRLEMEAAQKYRSQNVVTEILPALDNFERALQVEAESEQTKSLLQGMEMVRRQLMDALEKEGVEAIEAVGQEFDPNLHQAVMQVEDENFGSNIVIEELQKGYKLKDRVIRPSMVKVNQ</sequence>
<protein>
    <recommendedName>
        <fullName evidence="1">Protein GrpE</fullName>
    </recommendedName>
    <alternativeName>
        <fullName evidence="1">HSP-70 cofactor</fullName>
    </alternativeName>
</protein>
<name>GRPE_BACVZ</name>
<evidence type="ECO:0000255" key="1">
    <source>
        <dbReference type="HAMAP-Rule" id="MF_01151"/>
    </source>
</evidence>
<evidence type="ECO:0000256" key="2">
    <source>
        <dbReference type="SAM" id="MobiDB-lite"/>
    </source>
</evidence>
<feature type="chain" id="PRO_1000053538" description="Protein GrpE">
    <location>
        <begin position="1"/>
        <end position="191"/>
    </location>
</feature>
<feature type="region of interest" description="Disordered" evidence="2">
    <location>
        <begin position="1"/>
        <end position="49"/>
    </location>
</feature>
<feature type="compositionally biased region" description="Acidic residues" evidence="2">
    <location>
        <begin position="12"/>
        <end position="21"/>
    </location>
</feature>
<feature type="compositionally biased region" description="Basic and acidic residues" evidence="2">
    <location>
        <begin position="30"/>
        <end position="49"/>
    </location>
</feature>
<proteinExistence type="inferred from homology"/>
<accession>A7Z6W2</accession>
<keyword id="KW-0143">Chaperone</keyword>
<keyword id="KW-0963">Cytoplasm</keyword>
<keyword id="KW-0346">Stress response</keyword>
<dbReference type="EMBL" id="CP000560">
    <property type="protein sequence ID" value="ABS74738.1"/>
    <property type="molecule type" value="Genomic_DNA"/>
</dbReference>
<dbReference type="RefSeq" id="WP_003152892.1">
    <property type="nucleotide sequence ID" value="NC_009725.2"/>
</dbReference>
<dbReference type="SMR" id="A7Z6W2"/>
<dbReference type="GeneID" id="93081516"/>
<dbReference type="KEGG" id="bay:RBAM_023780"/>
<dbReference type="HOGENOM" id="CLU_057217_5_2_9"/>
<dbReference type="Proteomes" id="UP000001120">
    <property type="component" value="Chromosome"/>
</dbReference>
<dbReference type="GO" id="GO:0005737">
    <property type="term" value="C:cytoplasm"/>
    <property type="evidence" value="ECO:0007669"/>
    <property type="project" value="UniProtKB-SubCell"/>
</dbReference>
<dbReference type="GO" id="GO:0000774">
    <property type="term" value="F:adenyl-nucleotide exchange factor activity"/>
    <property type="evidence" value="ECO:0007669"/>
    <property type="project" value="InterPro"/>
</dbReference>
<dbReference type="GO" id="GO:0042803">
    <property type="term" value="F:protein homodimerization activity"/>
    <property type="evidence" value="ECO:0007669"/>
    <property type="project" value="InterPro"/>
</dbReference>
<dbReference type="GO" id="GO:0051087">
    <property type="term" value="F:protein-folding chaperone binding"/>
    <property type="evidence" value="ECO:0007669"/>
    <property type="project" value="InterPro"/>
</dbReference>
<dbReference type="GO" id="GO:0051082">
    <property type="term" value="F:unfolded protein binding"/>
    <property type="evidence" value="ECO:0007669"/>
    <property type="project" value="TreeGrafter"/>
</dbReference>
<dbReference type="GO" id="GO:0006457">
    <property type="term" value="P:protein folding"/>
    <property type="evidence" value="ECO:0007669"/>
    <property type="project" value="InterPro"/>
</dbReference>
<dbReference type="CDD" id="cd00446">
    <property type="entry name" value="GrpE"/>
    <property type="match status" value="1"/>
</dbReference>
<dbReference type="FunFam" id="2.30.22.10:FF:000001">
    <property type="entry name" value="Protein GrpE"/>
    <property type="match status" value="1"/>
</dbReference>
<dbReference type="FunFam" id="3.90.20.20:FF:000002">
    <property type="entry name" value="Protein GrpE"/>
    <property type="match status" value="1"/>
</dbReference>
<dbReference type="Gene3D" id="3.90.20.20">
    <property type="match status" value="1"/>
</dbReference>
<dbReference type="Gene3D" id="2.30.22.10">
    <property type="entry name" value="Head domain of nucleotide exchange factor GrpE"/>
    <property type="match status" value="1"/>
</dbReference>
<dbReference type="HAMAP" id="MF_01151">
    <property type="entry name" value="GrpE"/>
    <property type="match status" value="1"/>
</dbReference>
<dbReference type="InterPro" id="IPR000740">
    <property type="entry name" value="GrpE"/>
</dbReference>
<dbReference type="InterPro" id="IPR013805">
    <property type="entry name" value="GrpE_coiled_coil"/>
</dbReference>
<dbReference type="InterPro" id="IPR009012">
    <property type="entry name" value="GrpE_head"/>
</dbReference>
<dbReference type="NCBIfam" id="NF010738">
    <property type="entry name" value="PRK14140.1"/>
    <property type="match status" value="1"/>
</dbReference>
<dbReference type="PANTHER" id="PTHR21237">
    <property type="entry name" value="GRPE PROTEIN"/>
    <property type="match status" value="1"/>
</dbReference>
<dbReference type="PANTHER" id="PTHR21237:SF23">
    <property type="entry name" value="GRPE PROTEIN HOMOLOG, MITOCHONDRIAL"/>
    <property type="match status" value="1"/>
</dbReference>
<dbReference type="Pfam" id="PF01025">
    <property type="entry name" value="GrpE"/>
    <property type="match status" value="1"/>
</dbReference>
<dbReference type="PRINTS" id="PR00773">
    <property type="entry name" value="GRPEPROTEIN"/>
</dbReference>
<dbReference type="SUPFAM" id="SSF58014">
    <property type="entry name" value="Coiled-coil domain of nucleotide exchange factor GrpE"/>
    <property type="match status" value="1"/>
</dbReference>
<dbReference type="SUPFAM" id="SSF51064">
    <property type="entry name" value="Head domain of nucleotide exchange factor GrpE"/>
    <property type="match status" value="1"/>
</dbReference>
<dbReference type="PROSITE" id="PS01071">
    <property type="entry name" value="GRPE"/>
    <property type="match status" value="1"/>
</dbReference>